<sequence length="341" mass="39156">MSKSKDDAPHELESQFILRLPPEYASTVRRAVQSGHVNLKDRLTIELHPDGRHGIVRVDRVPLAAKLVDLPCVMESLKTIDKKTFYKTADICQMLVSTVDGDLYPPVEEPVAPADPKASKKKDKDKEKKFVWNHGITLPLKNVRKRRFRKTAKKKYIESPDVEKEVKRLLSTDAEAVSTRWEIIAEDETKETENQGLDISSPGMSGHRQGHDSLEHDELREIFNDLSSSSEDEEDVNVIDTEEDLERQLQDKLNESDEQHQENEGTNQLVMGIQKQIDNMKGKLQETQDRAKRQEDLIMKVENLALKNRFQAVLDELKQKEDREKEQLSSLQEGLESLLEK</sequence>
<comment type="function">
    <text evidence="1">The TFIID basal transcription factor complex plays a major role in the initiation of RNA polymerase II (Pol II)-dependent transcription. TFIID recognizes and binds promoters with or without a TATA box via its subunit TBP, a TATA-box-binding protein, and promotes assembly of the pre-initiation complex (PIC). The TFIID complex consists of TBP and TBP-associated factors (TAFs), including TAF1, TAF2, TAF3, TAF4, TAF5, TAF6, TAF7, TAF8, TAF9, TAF10, TAF11, TAF12 and TAF13. TAF7 forms a promoter DNA binding subcomplex of TFIID, together with TAF1 and TAF2. Part of a TFIID complex containing TAF10 (TFIID alpha) and a TFIID complex lacking TAF10 (TFIID beta).</text>
</comment>
<comment type="subunit">
    <text evidence="1">Component of the TFIID basal transcription factor complex, composed of TATA-box-binding protein TBP, and a number of TBP-associated factors (TAFs), including TAF1, TAF2, TAF3, TAF4, TAF5, TAF6, TAF7, TAF8, TAF9, TAF10, TAF11, TAF12 and TAF13. Part of a TFIID-containing RNA polymerase II pre-initiation complex that is composed of TBP and at least GTF2A1, GTF2A2, GTF2E1, GTF2E2, GTF2F1, GTF2H2, GTF2H3, GTF2H4, GTF2H5, GTF2B, TCEA1, ERCC2, ERCC3, TAF1, TAF2, TAF3, TAF4, TAF5, TAF6, TAF7, TAF8, TAF9, TAF10, TAF11, TAF12 and TAF13. Interacts with TAF1; the interaction is direct. Interacts with TAF1, TAF5, TAF11, TAF12, and TAF13, but not with TAF10 or TBP. Component of some MLL1/MLL complex, at least composed of the core components KMT2A/MLL1, ASH2L, HCFC1/HCF1, WDR5 and RBBP5, as well as the facultative components BACC1, CHD8, E2F6, HSP70, INO80C, KANSL1, LAS1L, MAX, MCRS1, MGA, MYST1/MOF, PELP1, PHF20, PRP31, RING2, RUVB1/TIP49A, RUVB2/TIP49B, SENP3, TAF1, TAF4, TAF6, TAF7, TAF9 and TEX10. Interacts with CIITA and TAF1 and inhibits their acetyltransferase activity, and behaving as a repressor of CIITA- and TAF1-regulated promoters.</text>
</comment>
<comment type="subcellular location">
    <subcellularLocation>
        <location evidence="2">Nucleus</location>
    </subcellularLocation>
</comment>
<comment type="PTM">
    <text evidence="1">Phosphorylated by CIITA. Phosphorylation at Ser-256 by TAF1 in early G1 phase disrupts binding to TAF1.</text>
</comment>
<comment type="PTM">
    <text evidence="1">Ubiquitinated by TRIM26; leading to proteasomal degradation.</text>
</comment>
<comment type="similarity">
    <text evidence="5">Belongs to the TAF7 family.</text>
</comment>
<evidence type="ECO:0000250" key="1">
    <source>
        <dbReference type="UniProtKB" id="Q15545"/>
    </source>
</evidence>
<evidence type="ECO:0000250" key="2">
    <source>
        <dbReference type="UniProtKB" id="Q9R1C0"/>
    </source>
</evidence>
<evidence type="ECO:0000255" key="3"/>
<evidence type="ECO:0000256" key="4">
    <source>
        <dbReference type="SAM" id="MobiDB-lite"/>
    </source>
</evidence>
<evidence type="ECO:0000305" key="5"/>
<keyword id="KW-0175">Coiled coil</keyword>
<keyword id="KW-0539">Nucleus</keyword>
<keyword id="KW-0597">Phosphoprotein</keyword>
<keyword id="KW-0804">Transcription</keyword>
<keyword id="KW-0805">Transcription regulation</keyword>
<keyword id="KW-0832">Ubl conjugation</keyword>
<organism>
    <name type="scientific">Cricetulus griseus</name>
    <name type="common">Chinese hamster</name>
    <name type="synonym">Cricetulus barabensis griseus</name>
    <dbReference type="NCBI Taxonomy" id="10029"/>
    <lineage>
        <taxon>Eukaryota</taxon>
        <taxon>Metazoa</taxon>
        <taxon>Chordata</taxon>
        <taxon>Craniata</taxon>
        <taxon>Vertebrata</taxon>
        <taxon>Euteleostomi</taxon>
        <taxon>Mammalia</taxon>
        <taxon>Eutheria</taxon>
        <taxon>Euarchontoglires</taxon>
        <taxon>Glires</taxon>
        <taxon>Rodentia</taxon>
        <taxon>Myomorpha</taxon>
        <taxon>Muroidea</taxon>
        <taxon>Cricetidae</taxon>
        <taxon>Cricetinae</taxon>
        <taxon>Cricetulus</taxon>
    </lineage>
</organism>
<proteinExistence type="evidence at protein level"/>
<dbReference type="EMBL" id="AY518896">
    <property type="protein sequence ID" value="AAS13444.1"/>
    <property type="molecule type" value="mRNA"/>
</dbReference>
<dbReference type="RefSeq" id="NP_001233653.1">
    <property type="nucleotide sequence ID" value="NM_001246724.1"/>
</dbReference>
<dbReference type="SMR" id="Q6R1L1"/>
<dbReference type="PaxDb" id="10029-NP_001233653.1"/>
<dbReference type="GeneID" id="100689466"/>
<dbReference type="KEGG" id="cge:100689466"/>
<dbReference type="CTD" id="6879"/>
<dbReference type="eggNOG" id="KOG4011">
    <property type="taxonomic scope" value="Eukaryota"/>
</dbReference>
<dbReference type="OrthoDB" id="153872at2759"/>
<dbReference type="Proteomes" id="UP000694386">
    <property type="component" value="Unplaced"/>
</dbReference>
<dbReference type="Proteomes" id="UP001108280">
    <property type="component" value="Chromosome 2"/>
</dbReference>
<dbReference type="GO" id="GO:0071339">
    <property type="term" value="C:MLL1 complex"/>
    <property type="evidence" value="ECO:0000250"/>
    <property type="project" value="UniProtKB"/>
</dbReference>
<dbReference type="GO" id="GO:0005669">
    <property type="term" value="C:transcription factor TFIID complex"/>
    <property type="evidence" value="ECO:0000250"/>
    <property type="project" value="UniProtKB"/>
</dbReference>
<dbReference type="GO" id="GO:0016251">
    <property type="term" value="F:RNA polymerase II general transcription initiation factor activity"/>
    <property type="evidence" value="ECO:0007669"/>
    <property type="project" value="TreeGrafter"/>
</dbReference>
<dbReference type="GO" id="GO:0006357">
    <property type="term" value="P:regulation of transcription by RNA polymerase II"/>
    <property type="evidence" value="ECO:0007669"/>
    <property type="project" value="TreeGrafter"/>
</dbReference>
<dbReference type="GO" id="GO:0051123">
    <property type="term" value="P:RNA polymerase II preinitiation complex assembly"/>
    <property type="evidence" value="ECO:0007669"/>
    <property type="project" value="TreeGrafter"/>
</dbReference>
<dbReference type="GO" id="GO:0000296">
    <property type="term" value="P:spermine transport"/>
    <property type="evidence" value="ECO:0000314"/>
    <property type="project" value="GO_Central"/>
</dbReference>
<dbReference type="CDD" id="cd08047">
    <property type="entry name" value="TAF7"/>
    <property type="match status" value="1"/>
</dbReference>
<dbReference type="InterPro" id="IPR037817">
    <property type="entry name" value="TAF7"/>
</dbReference>
<dbReference type="InterPro" id="IPR006751">
    <property type="entry name" value="TAFII55_prot_cons_reg"/>
</dbReference>
<dbReference type="PANTHER" id="PTHR12228">
    <property type="entry name" value="TRANSCRIPTION INITIATION FACTOR TFIID 55 KD SUBUNIT-RELATED"/>
    <property type="match status" value="1"/>
</dbReference>
<dbReference type="PANTHER" id="PTHR12228:SF6">
    <property type="entry name" value="TRANSCRIPTION INITIATION FACTOR TFIID SUBUNIT 7"/>
    <property type="match status" value="1"/>
</dbReference>
<dbReference type="Pfam" id="PF04658">
    <property type="entry name" value="TAFII55_N"/>
    <property type="match status" value="1"/>
</dbReference>
<dbReference type="SMART" id="SM01370">
    <property type="entry name" value="TAFII55_N"/>
    <property type="match status" value="1"/>
</dbReference>
<reference key="1">
    <citation type="journal article" date="2004" name="J. Biol. Chem.">
        <title>TATA-binding protein-associated factor 7 regulates polyamine transport activity and polyamine analog-induced apoptosis.</title>
        <authorList>
            <person name="Fukuchi J."/>
            <person name="Hiipakka R.A."/>
            <person name="Kokontis J.M."/>
            <person name="Nishimura K."/>
            <person name="Igarashi K."/>
            <person name="Liao S."/>
        </authorList>
    </citation>
    <scope>NUCLEOTIDE SEQUENCE [MRNA]</scope>
    <scope>CHARACTERIZATION</scope>
</reference>
<protein>
    <recommendedName>
        <fullName>Transcription initiation factor TFIID subunit 7</fullName>
    </recommendedName>
</protein>
<accession>Q6R1L1</accession>
<gene>
    <name type="primary">TAF7</name>
</gene>
<feature type="chain" id="PRO_0000293544" description="Transcription initiation factor TFIID subunit 7">
    <location>
        <begin position="1"/>
        <end position="341"/>
    </location>
</feature>
<feature type="region of interest" description="Disordered" evidence="4">
    <location>
        <begin position="105"/>
        <end position="126"/>
    </location>
</feature>
<feature type="region of interest" description="Disordered" evidence="4">
    <location>
        <begin position="188"/>
        <end position="212"/>
    </location>
</feature>
<feature type="region of interest" description="Disordered" evidence="4">
    <location>
        <begin position="321"/>
        <end position="341"/>
    </location>
</feature>
<feature type="coiled-coil region" evidence="3">
    <location>
        <begin position="236"/>
        <end position="341"/>
    </location>
</feature>
<feature type="compositionally biased region" description="Low complexity" evidence="4">
    <location>
        <begin position="105"/>
        <end position="116"/>
    </location>
</feature>
<feature type="compositionally biased region" description="Low complexity" evidence="4">
    <location>
        <begin position="328"/>
        <end position="341"/>
    </location>
</feature>
<feature type="modified residue" description="Phosphoserine" evidence="1">
    <location>
        <position position="171"/>
    </location>
</feature>
<feature type="modified residue" description="Phosphoserine" evidence="1">
    <location>
        <position position="200"/>
    </location>
</feature>
<feature type="modified residue" description="Phosphoserine" evidence="1">
    <location>
        <position position="201"/>
    </location>
</feature>
<feature type="modified residue" description="Phosphoserine" evidence="1">
    <location>
        <position position="213"/>
    </location>
</feature>
<feature type="modified residue" description="Phosphoserine" evidence="1">
    <location>
        <position position="256"/>
    </location>
</feature>
<name>TAF7_CRIGR</name>